<name>COAA_LACLM</name>
<reference key="1">
    <citation type="journal article" date="2007" name="J. Bacteriol.">
        <title>The complete genome sequence of the lactic acid bacterial paradigm Lactococcus lactis subsp. cremoris MG1363.</title>
        <authorList>
            <person name="Wegmann U."/>
            <person name="O'Connell-Motherway M."/>
            <person name="Zomer A."/>
            <person name="Buist G."/>
            <person name="Shearman C."/>
            <person name="Canchaya C."/>
            <person name="Ventura M."/>
            <person name="Goesmann A."/>
            <person name="Gasson M.J."/>
            <person name="Kuipers O.P."/>
            <person name="van Sinderen D."/>
            <person name="Kok J."/>
        </authorList>
    </citation>
    <scope>NUCLEOTIDE SEQUENCE [LARGE SCALE GENOMIC DNA]</scope>
    <source>
        <strain>MG1363</strain>
    </source>
</reference>
<organism>
    <name type="scientific">Lactococcus lactis subsp. cremoris (strain MG1363)</name>
    <dbReference type="NCBI Taxonomy" id="416870"/>
    <lineage>
        <taxon>Bacteria</taxon>
        <taxon>Bacillati</taxon>
        <taxon>Bacillota</taxon>
        <taxon>Bacilli</taxon>
        <taxon>Lactobacillales</taxon>
        <taxon>Streptococcaceae</taxon>
        <taxon>Lactococcus</taxon>
        <taxon>Lactococcus cremoris subsp. cremoris</taxon>
    </lineage>
</organism>
<protein>
    <recommendedName>
        <fullName evidence="1">Pantothenate kinase</fullName>
        <ecNumber evidence="1">2.7.1.33</ecNumber>
    </recommendedName>
    <alternativeName>
        <fullName evidence="1">Pantothenic acid kinase</fullName>
    </alternativeName>
</protein>
<accession>A2RK41</accession>
<feature type="chain" id="PRO_1000043220" description="Pantothenate kinase">
    <location>
        <begin position="1"/>
        <end position="306"/>
    </location>
</feature>
<feature type="binding site" evidence="1">
    <location>
        <begin position="90"/>
        <end position="97"/>
    </location>
    <ligand>
        <name>ATP</name>
        <dbReference type="ChEBI" id="CHEBI:30616"/>
    </ligand>
</feature>
<dbReference type="EC" id="2.7.1.33" evidence="1"/>
<dbReference type="EMBL" id="AM406671">
    <property type="protein sequence ID" value="CAL97651.1"/>
    <property type="molecule type" value="Genomic_DNA"/>
</dbReference>
<dbReference type="RefSeq" id="WP_011834976.1">
    <property type="nucleotide sequence ID" value="NC_009004.1"/>
</dbReference>
<dbReference type="SMR" id="A2RK41"/>
<dbReference type="STRING" id="416870.llmg_1058"/>
<dbReference type="GeneID" id="61109677"/>
<dbReference type="KEGG" id="llm:llmg_1058"/>
<dbReference type="eggNOG" id="COG1072">
    <property type="taxonomic scope" value="Bacteria"/>
</dbReference>
<dbReference type="HOGENOM" id="CLU_053818_1_1_9"/>
<dbReference type="OrthoDB" id="1550976at2"/>
<dbReference type="PhylomeDB" id="A2RK41"/>
<dbReference type="UniPathway" id="UPA00241">
    <property type="reaction ID" value="UER00352"/>
</dbReference>
<dbReference type="Proteomes" id="UP000000364">
    <property type="component" value="Chromosome"/>
</dbReference>
<dbReference type="GO" id="GO:0005737">
    <property type="term" value="C:cytoplasm"/>
    <property type="evidence" value="ECO:0007669"/>
    <property type="project" value="UniProtKB-SubCell"/>
</dbReference>
<dbReference type="GO" id="GO:0005524">
    <property type="term" value="F:ATP binding"/>
    <property type="evidence" value="ECO:0007669"/>
    <property type="project" value="UniProtKB-UniRule"/>
</dbReference>
<dbReference type="GO" id="GO:0004594">
    <property type="term" value="F:pantothenate kinase activity"/>
    <property type="evidence" value="ECO:0007669"/>
    <property type="project" value="UniProtKB-UniRule"/>
</dbReference>
<dbReference type="GO" id="GO:0015937">
    <property type="term" value="P:coenzyme A biosynthetic process"/>
    <property type="evidence" value="ECO:0007669"/>
    <property type="project" value="UniProtKB-UniRule"/>
</dbReference>
<dbReference type="CDD" id="cd02025">
    <property type="entry name" value="PanK"/>
    <property type="match status" value="1"/>
</dbReference>
<dbReference type="Gene3D" id="3.40.50.300">
    <property type="entry name" value="P-loop containing nucleotide triphosphate hydrolases"/>
    <property type="match status" value="1"/>
</dbReference>
<dbReference type="HAMAP" id="MF_00215">
    <property type="entry name" value="Pantothen_kinase_1"/>
    <property type="match status" value="1"/>
</dbReference>
<dbReference type="InterPro" id="IPR027417">
    <property type="entry name" value="P-loop_NTPase"/>
</dbReference>
<dbReference type="InterPro" id="IPR004566">
    <property type="entry name" value="PanK"/>
</dbReference>
<dbReference type="InterPro" id="IPR006083">
    <property type="entry name" value="PRK/URK"/>
</dbReference>
<dbReference type="NCBIfam" id="TIGR00554">
    <property type="entry name" value="panK_bact"/>
    <property type="match status" value="1"/>
</dbReference>
<dbReference type="PANTHER" id="PTHR10285">
    <property type="entry name" value="URIDINE KINASE"/>
    <property type="match status" value="1"/>
</dbReference>
<dbReference type="Pfam" id="PF00485">
    <property type="entry name" value="PRK"/>
    <property type="match status" value="1"/>
</dbReference>
<dbReference type="PIRSF" id="PIRSF000545">
    <property type="entry name" value="Pantothenate_kin"/>
    <property type="match status" value="1"/>
</dbReference>
<dbReference type="SUPFAM" id="SSF52540">
    <property type="entry name" value="P-loop containing nucleoside triphosphate hydrolases"/>
    <property type="match status" value="1"/>
</dbReference>
<keyword id="KW-0067">ATP-binding</keyword>
<keyword id="KW-0173">Coenzyme A biosynthesis</keyword>
<keyword id="KW-0963">Cytoplasm</keyword>
<keyword id="KW-0418">Kinase</keyword>
<keyword id="KW-0547">Nucleotide-binding</keyword>
<keyword id="KW-0808">Transferase</keyword>
<evidence type="ECO:0000255" key="1">
    <source>
        <dbReference type="HAMAP-Rule" id="MF_00215"/>
    </source>
</evidence>
<proteinExistence type="inferred from homology"/>
<comment type="catalytic activity">
    <reaction evidence="1">
        <text>(R)-pantothenate + ATP = (R)-4'-phosphopantothenate + ADP + H(+)</text>
        <dbReference type="Rhea" id="RHEA:16373"/>
        <dbReference type="ChEBI" id="CHEBI:10986"/>
        <dbReference type="ChEBI" id="CHEBI:15378"/>
        <dbReference type="ChEBI" id="CHEBI:29032"/>
        <dbReference type="ChEBI" id="CHEBI:30616"/>
        <dbReference type="ChEBI" id="CHEBI:456216"/>
        <dbReference type="EC" id="2.7.1.33"/>
    </reaction>
</comment>
<comment type="pathway">
    <text evidence="1">Cofactor biosynthesis; coenzyme A biosynthesis; CoA from (R)-pantothenate: step 1/5.</text>
</comment>
<comment type="subcellular location">
    <subcellularLocation>
        <location evidence="1">Cytoplasm</location>
    </subcellularLocation>
</comment>
<comment type="similarity">
    <text evidence="1">Belongs to the prokaryotic pantothenate kinase family.</text>
</comment>
<gene>
    <name evidence="1" type="primary">coaA</name>
    <name type="ordered locus">llmg_1058</name>
</gene>
<sequence length="306" mass="35954">MNEFINFDEISRETWQNLYNTSIAPLTHDELESIRSLNDEISLQDVEDVYLPLIHLLRLYKKNLEDMSYSKGLFLQKIVKTPPLIIGISGSVAVGKSTTARLLQLLLSRAFPKLTVDLVTTDGFLYTTDDLKNMGILDRKGFPESYDMEKLTSFLYHVKNGERFEVPIYSHETYDILPNQSQIIDSPDILIVEGINVLQNPQNQLLYISDFYDFSIYVDADEKLIEKWYLERFDSLLKLAKYDQTNFYHQFTKMPEDKVLNLARETWARVNRVNLREYIEPTRNRAEIILHKAENHHIDKIYLKKF</sequence>